<keyword id="KW-0067">ATP-binding</keyword>
<keyword id="KW-0963">Cytoplasm</keyword>
<keyword id="KW-0275">Fatty acid biosynthesis</keyword>
<keyword id="KW-0276">Fatty acid metabolism</keyword>
<keyword id="KW-0444">Lipid biosynthesis</keyword>
<keyword id="KW-0443">Lipid metabolism</keyword>
<keyword id="KW-0547">Nucleotide-binding</keyword>
<keyword id="KW-0808">Transferase</keyword>
<evidence type="ECO:0000255" key="1">
    <source>
        <dbReference type="HAMAP-Rule" id="MF_00823"/>
    </source>
</evidence>
<evidence type="ECO:0000255" key="2">
    <source>
        <dbReference type="PROSITE-ProRule" id="PRU01137"/>
    </source>
</evidence>
<accession>Q03M45</accession>
<feature type="chain" id="PRO_1000062688" description="Acetyl-coenzyme A carboxylase carboxyl transferase subunit alpha">
    <location>
        <begin position="1"/>
        <end position="256"/>
    </location>
</feature>
<feature type="domain" description="CoA carboxyltransferase C-terminal" evidence="2">
    <location>
        <begin position="1"/>
        <end position="236"/>
    </location>
</feature>
<organism>
    <name type="scientific">Streptococcus thermophilus (strain ATCC BAA-491 / LMD-9)</name>
    <dbReference type="NCBI Taxonomy" id="322159"/>
    <lineage>
        <taxon>Bacteria</taxon>
        <taxon>Bacillati</taxon>
        <taxon>Bacillota</taxon>
        <taxon>Bacilli</taxon>
        <taxon>Lactobacillales</taxon>
        <taxon>Streptococcaceae</taxon>
        <taxon>Streptococcus</taxon>
    </lineage>
</organism>
<reference key="1">
    <citation type="journal article" date="2006" name="Proc. Natl. Acad. Sci. U.S.A.">
        <title>Comparative genomics of the lactic acid bacteria.</title>
        <authorList>
            <person name="Makarova K.S."/>
            <person name="Slesarev A."/>
            <person name="Wolf Y.I."/>
            <person name="Sorokin A."/>
            <person name="Mirkin B."/>
            <person name="Koonin E.V."/>
            <person name="Pavlov A."/>
            <person name="Pavlova N."/>
            <person name="Karamychev V."/>
            <person name="Polouchine N."/>
            <person name="Shakhova V."/>
            <person name="Grigoriev I."/>
            <person name="Lou Y."/>
            <person name="Rohksar D."/>
            <person name="Lucas S."/>
            <person name="Huang K."/>
            <person name="Goodstein D.M."/>
            <person name="Hawkins T."/>
            <person name="Plengvidhya V."/>
            <person name="Welker D."/>
            <person name="Hughes J."/>
            <person name="Goh Y."/>
            <person name="Benson A."/>
            <person name="Baldwin K."/>
            <person name="Lee J.-H."/>
            <person name="Diaz-Muniz I."/>
            <person name="Dosti B."/>
            <person name="Smeianov V."/>
            <person name="Wechter W."/>
            <person name="Barabote R."/>
            <person name="Lorca G."/>
            <person name="Altermann E."/>
            <person name="Barrangou R."/>
            <person name="Ganesan B."/>
            <person name="Xie Y."/>
            <person name="Rawsthorne H."/>
            <person name="Tamir D."/>
            <person name="Parker C."/>
            <person name="Breidt F."/>
            <person name="Broadbent J.R."/>
            <person name="Hutkins R."/>
            <person name="O'Sullivan D."/>
            <person name="Steele J."/>
            <person name="Unlu G."/>
            <person name="Saier M.H. Jr."/>
            <person name="Klaenhammer T."/>
            <person name="Richardson P."/>
            <person name="Kozyavkin S."/>
            <person name="Weimer B.C."/>
            <person name="Mills D.A."/>
        </authorList>
    </citation>
    <scope>NUCLEOTIDE SEQUENCE [LARGE SCALE GENOMIC DNA]</scope>
    <source>
        <strain>ATCC BAA-491 / LMD-9</strain>
    </source>
</reference>
<dbReference type="EC" id="2.1.3.15" evidence="1"/>
<dbReference type="EMBL" id="CP000419">
    <property type="protein sequence ID" value="ABJ65727.1"/>
    <property type="molecule type" value="Genomic_DNA"/>
</dbReference>
<dbReference type="RefSeq" id="WP_002949791.1">
    <property type="nucleotide sequence ID" value="NC_008532.1"/>
</dbReference>
<dbReference type="SMR" id="Q03M45"/>
<dbReference type="KEGG" id="ste:STER_0439"/>
<dbReference type="HOGENOM" id="CLU_015486_0_2_9"/>
<dbReference type="UniPathway" id="UPA00655">
    <property type="reaction ID" value="UER00711"/>
</dbReference>
<dbReference type="GO" id="GO:0009317">
    <property type="term" value="C:acetyl-CoA carboxylase complex"/>
    <property type="evidence" value="ECO:0007669"/>
    <property type="project" value="InterPro"/>
</dbReference>
<dbReference type="GO" id="GO:0003989">
    <property type="term" value="F:acetyl-CoA carboxylase activity"/>
    <property type="evidence" value="ECO:0007669"/>
    <property type="project" value="InterPro"/>
</dbReference>
<dbReference type="GO" id="GO:0005524">
    <property type="term" value="F:ATP binding"/>
    <property type="evidence" value="ECO:0007669"/>
    <property type="project" value="UniProtKB-KW"/>
</dbReference>
<dbReference type="GO" id="GO:0016743">
    <property type="term" value="F:carboxyl- or carbamoyltransferase activity"/>
    <property type="evidence" value="ECO:0007669"/>
    <property type="project" value="UniProtKB-UniRule"/>
</dbReference>
<dbReference type="GO" id="GO:0006633">
    <property type="term" value="P:fatty acid biosynthetic process"/>
    <property type="evidence" value="ECO:0007669"/>
    <property type="project" value="UniProtKB-KW"/>
</dbReference>
<dbReference type="GO" id="GO:2001295">
    <property type="term" value="P:malonyl-CoA biosynthetic process"/>
    <property type="evidence" value="ECO:0007669"/>
    <property type="project" value="UniProtKB-UniRule"/>
</dbReference>
<dbReference type="Gene3D" id="3.90.226.10">
    <property type="entry name" value="2-enoyl-CoA Hydratase, Chain A, domain 1"/>
    <property type="match status" value="1"/>
</dbReference>
<dbReference type="HAMAP" id="MF_00823">
    <property type="entry name" value="AcetylCoA_CT_alpha"/>
    <property type="match status" value="1"/>
</dbReference>
<dbReference type="InterPro" id="IPR001095">
    <property type="entry name" value="Acetyl_CoA_COase_a_su"/>
</dbReference>
<dbReference type="InterPro" id="IPR029045">
    <property type="entry name" value="ClpP/crotonase-like_dom_sf"/>
</dbReference>
<dbReference type="InterPro" id="IPR011763">
    <property type="entry name" value="COA_CT_C"/>
</dbReference>
<dbReference type="NCBIfam" id="TIGR00513">
    <property type="entry name" value="accA"/>
    <property type="match status" value="1"/>
</dbReference>
<dbReference type="NCBIfam" id="NF041504">
    <property type="entry name" value="AccA_sub"/>
    <property type="match status" value="1"/>
</dbReference>
<dbReference type="NCBIfam" id="NF004344">
    <property type="entry name" value="PRK05724.1"/>
    <property type="match status" value="1"/>
</dbReference>
<dbReference type="NCBIfam" id="NF008971">
    <property type="entry name" value="PRK12319.1"/>
    <property type="match status" value="1"/>
</dbReference>
<dbReference type="PANTHER" id="PTHR42853">
    <property type="entry name" value="ACETYL-COENZYME A CARBOXYLASE CARBOXYL TRANSFERASE SUBUNIT ALPHA"/>
    <property type="match status" value="1"/>
</dbReference>
<dbReference type="PANTHER" id="PTHR42853:SF3">
    <property type="entry name" value="ACETYL-COENZYME A CARBOXYLASE CARBOXYL TRANSFERASE SUBUNIT ALPHA, CHLOROPLASTIC"/>
    <property type="match status" value="1"/>
</dbReference>
<dbReference type="Pfam" id="PF03255">
    <property type="entry name" value="ACCA"/>
    <property type="match status" value="1"/>
</dbReference>
<dbReference type="PRINTS" id="PR01069">
    <property type="entry name" value="ACCCTRFRASEA"/>
</dbReference>
<dbReference type="SUPFAM" id="SSF52096">
    <property type="entry name" value="ClpP/crotonase"/>
    <property type="match status" value="1"/>
</dbReference>
<dbReference type="PROSITE" id="PS50989">
    <property type="entry name" value="COA_CT_CTER"/>
    <property type="match status" value="1"/>
</dbReference>
<protein>
    <recommendedName>
        <fullName evidence="1">Acetyl-coenzyme A carboxylase carboxyl transferase subunit alpha</fullName>
        <shortName evidence="1">ACCase subunit alpha</shortName>
        <shortName evidence="1">Acetyl-CoA carboxylase carboxyltransferase subunit alpha</shortName>
        <ecNumber evidence="1">2.1.3.15</ecNumber>
    </recommendedName>
</protein>
<sequence>MSDVARILKEARDQGRLTALDFAKEIFDDFIELHGDRNFRDDGAVIGGIGRLNGQAVTVVGIQKGKNLQDNLNRNFGQPHPEGYRKALRLMKQAEKFGRPVVTFINTAGAYPGVGAEERGQGEAIARNLMEMSDLKVPIIAIIIGEGGSGGALALAVADKVWMLENTIYSILSPEGFATILWKDGSRSEEAAELMKITSGELLNMGIVDKVIPERGYFTSEIIEAIKTAIVDELAELSQLSTEDLLEARYQRFRKY</sequence>
<name>ACCA_STRTD</name>
<proteinExistence type="inferred from homology"/>
<gene>
    <name evidence="1" type="primary">accA</name>
    <name type="ordered locus">STER_0439</name>
</gene>
<comment type="function">
    <text evidence="1">Component of the acetyl coenzyme A carboxylase (ACC) complex. First, biotin carboxylase catalyzes the carboxylation of biotin on its carrier protein (BCCP) and then the CO(2) group is transferred by the carboxyltransferase to acetyl-CoA to form malonyl-CoA.</text>
</comment>
<comment type="catalytic activity">
    <reaction evidence="1">
        <text>N(6)-carboxybiotinyl-L-lysyl-[protein] + acetyl-CoA = N(6)-biotinyl-L-lysyl-[protein] + malonyl-CoA</text>
        <dbReference type="Rhea" id="RHEA:54728"/>
        <dbReference type="Rhea" id="RHEA-COMP:10505"/>
        <dbReference type="Rhea" id="RHEA-COMP:10506"/>
        <dbReference type="ChEBI" id="CHEBI:57288"/>
        <dbReference type="ChEBI" id="CHEBI:57384"/>
        <dbReference type="ChEBI" id="CHEBI:83144"/>
        <dbReference type="ChEBI" id="CHEBI:83145"/>
        <dbReference type="EC" id="2.1.3.15"/>
    </reaction>
</comment>
<comment type="pathway">
    <text evidence="1">Lipid metabolism; malonyl-CoA biosynthesis; malonyl-CoA from acetyl-CoA: step 1/1.</text>
</comment>
<comment type="subunit">
    <text evidence="1">Acetyl-CoA carboxylase is a heterohexamer composed of biotin carboxyl carrier protein (AccB), biotin carboxylase (AccC) and two subunits each of ACCase subunit alpha (AccA) and ACCase subunit beta (AccD).</text>
</comment>
<comment type="subcellular location">
    <subcellularLocation>
        <location evidence="1">Cytoplasm</location>
    </subcellularLocation>
</comment>
<comment type="similarity">
    <text evidence="1">Belongs to the AccA family.</text>
</comment>